<dbReference type="EMBL" id="CU329671">
    <property type="protein sequence ID" value="CAC22609.1"/>
    <property type="molecule type" value="Genomic_DNA"/>
</dbReference>
<dbReference type="RefSeq" id="NP_595347.1">
    <property type="nucleotide sequence ID" value="NM_001021255.2"/>
</dbReference>
<dbReference type="BioGRID" id="277633">
    <property type="interactions" value="5"/>
</dbReference>
<dbReference type="FunCoup" id="Q9C1W7">
    <property type="interactions" value="6"/>
</dbReference>
<dbReference type="STRING" id="284812.Q9C1W7"/>
<dbReference type="iPTMnet" id="Q9C1W7"/>
<dbReference type="PaxDb" id="4896-SPBC713.08.1"/>
<dbReference type="EnsemblFungi" id="SPBC713.08.1">
    <property type="protein sequence ID" value="SPBC713.08.1:pep"/>
    <property type="gene ID" value="SPBC713.08"/>
</dbReference>
<dbReference type="GeneID" id="2541118"/>
<dbReference type="KEGG" id="spo:2541118"/>
<dbReference type="PomBase" id="SPBC713.08">
    <property type="gene designation" value="mim1"/>
</dbReference>
<dbReference type="VEuPathDB" id="FungiDB:SPBC713.08"/>
<dbReference type="HOGENOM" id="CLU_2741478_0_0_1"/>
<dbReference type="InParanoid" id="Q9C1W7"/>
<dbReference type="OMA" id="HTRIYSI"/>
<dbReference type="PhylomeDB" id="Q9C1W7"/>
<dbReference type="PRO" id="PR:Q9C1W7"/>
<dbReference type="Proteomes" id="UP000002485">
    <property type="component" value="Chromosome II"/>
</dbReference>
<dbReference type="GO" id="GO:0140595">
    <property type="term" value="C:MIM complex"/>
    <property type="evidence" value="ECO:0000353"/>
    <property type="project" value="PomBase"/>
</dbReference>
<dbReference type="GO" id="GO:0005739">
    <property type="term" value="C:mitochondrion"/>
    <property type="evidence" value="ECO:0000269"/>
    <property type="project" value="PomBase"/>
</dbReference>
<dbReference type="GO" id="GO:0045040">
    <property type="term" value="P:protein insertion into mitochondrial outer membrane"/>
    <property type="evidence" value="ECO:0000315"/>
    <property type="project" value="PomBase"/>
</dbReference>
<dbReference type="InterPro" id="IPR013262">
    <property type="entry name" value="OMP_MIM1/TOM13_mt"/>
</dbReference>
<dbReference type="PANTHER" id="PTHR28241">
    <property type="entry name" value="MITOCHONDRIAL IMPORT PROTEIN 1"/>
    <property type="match status" value="1"/>
</dbReference>
<dbReference type="PANTHER" id="PTHR28241:SF1">
    <property type="entry name" value="MITOCHONDRIAL IMPORT PROTEIN 1"/>
    <property type="match status" value="1"/>
</dbReference>
<dbReference type="Pfam" id="PF08219">
    <property type="entry name" value="TOM13"/>
    <property type="match status" value="1"/>
</dbReference>
<proteinExistence type="evidence at protein level"/>
<evidence type="ECO:0000250" key="1">
    <source>
        <dbReference type="UniProtKB" id="Q08176"/>
    </source>
</evidence>
<evidence type="ECO:0000255" key="2"/>
<evidence type="ECO:0000269" key="3">
    <source>
    </source>
</evidence>
<evidence type="ECO:0000303" key="4">
    <source>
    </source>
</evidence>
<evidence type="ECO:0000305" key="5"/>
<evidence type="ECO:0000312" key="6">
    <source>
        <dbReference type="PomBase" id="SPBC713.08"/>
    </source>
</evidence>
<feature type="chain" id="PRO_0000218766" description="Mitochondrial import protein 1">
    <location>
        <begin position="1"/>
        <end position="71"/>
    </location>
</feature>
<feature type="transmembrane region" description="Helical" evidence="2">
    <location>
        <begin position="22"/>
        <end position="44"/>
    </location>
</feature>
<keyword id="KW-0472">Membrane</keyword>
<keyword id="KW-0496">Mitochondrion</keyword>
<keyword id="KW-1000">Mitochondrion outer membrane</keyword>
<keyword id="KW-0653">Protein transport</keyword>
<keyword id="KW-1185">Reference proteome</keyword>
<keyword id="KW-0812">Transmembrane</keyword>
<keyword id="KW-1133">Transmembrane helix</keyword>
<keyword id="KW-0813">Transport</keyword>
<name>MIM1_SCHPO</name>
<gene>
    <name evidence="4" type="primary">mim1</name>
    <name evidence="6" type="ORF">SPBC713.08</name>
</gene>
<protein>
    <recommendedName>
        <fullName>Mitochondrial import protein 1</fullName>
    </recommendedName>
</protein>
<accession>Q9C1W7</accession>
<reference key="1">
    <citation type="journal article" date="2002" name="Nature">
        <title>The genome sequence of Schizosaccharomyces pombe.</title>
        <authorList>
            <person name="Wood V."/>
            <person name="Gwilliam R."/>
            <person name="Rajandream M.A."/>
            <person name="Lyne M.H."/>
            <person name="Lyne R."/>
            <person name="Stewart A."/>
            <person name="Sgouros J.G."/>
            <person name="Peat N."/>
            <person name="Hayles J."/>
            <person name="Baker S.G."/>
            <person name="Basham D."/>
            <person name="Bowman S."/>
            <person name="Brooks K."/>
            <person name="Brown D."/>
            <person name="Brown S."/>
            <person name="Chillingworth T."/>
            <person name="Churcher C.M."/>
            <person name="Collins M."/>
            <person name="Connor R."/>
            <person name="Cronin A."/>
            <person name="Davis P."/>
            <person name="Feltwell T."/>
            <person name="Fraser A."/>
            <person name="Gentles S."/>
            <person name="Goble A."/>
            <person name="Hamlin N."/>
            <person name="Harris D.E."/>
            <person name="Hidalgo J."/>
            <person name="Hodgson G."/>
            <person name="Holroyd S."/>
            <person name="Hornsby T."/>
            <person name="Howarth S."/>
            <person name="Huckle E.J."/>
            <person name="Hunt S."/>
            <person name="Jagels K."/>
            <person name="James K.D."/>
            <person name="Jones L."/>
            <person name="Jones M."/>
            <person name="Leather S."/>
            <person name="McDonald S."/>
            <person name="McLean J."/>
            <person name="Mooney P."/>
            <person name="Moule S."/>
            <person name="Mungall K.L."/>
            <person name="Murphy L.D."/>
            <person name="Niblett D."/>
            <person name="Odell C."/>
            <person name="Oliver K."/>
            <person name="O'Neil S."/>
            <person name="Pearson D."/>
            <person name="Quail M.A."/>
            <person name="Rabbinowitsch E."/>
            <person name="Rutherford K.M."/>
            <person name="Rutter S."/>
            <person name="Saunders D."/>
            <person name="Seeger K."/>
            <person name="Sharp S."/>
            <person name="Skelton J."/>
            <person name="Simmonds M.N."/>
            <person name="Squares R."/>
            <person name="Squares S."/>
            <person name="Stevens K."/>
            <person name="Taylor K."/>
            <person name="Taylor R.G."/>
            <person name="Tivey A."/>
            <person name="Walsh S.V."/>
            <person name="Warren T."/>
            <person name="Whitehead S."/>
            <person name="Woodward J.R."/>
            <person name="Volckaert G."/>
            <person name="Aert R."/>
            <person name="Robben J."/>
            <person name="Grymonprez B."/>
            <person name="Weltjens I."/>
            <person name="Vanstreels E."/>
            <person name="Rieger M."/>
            <person name="Schaefer M."/>
            <person name="Mueller-Auer S."/>
            <person name="Gabel C."/>
            <person name="Fuchs M."/>
            <person name="Duesterhoeft A."/>
            <person name="Fritzc C."/>
            <person name="Holzer E."/>
            <person name="Moestl D."/>
            <person name="Hilbert H."/>
            <person name="Borzym K."/>
            <person name="Langer I."/>
            <person name="Beck A."/>
            <person name="Lehrach H."/>
            <person name="Reinhardt R."/>
            <person name="Pohl T.M."/>
            <person name="Eger P."/>
            <person name="Zimmermann W."/>
            <person name="Wedler H."/>
            <person name="Wambutt R."/>
            <person name="Purnelle B."/>
            <person name="Goffeau A."/>
            <person name="Cadieu E."/>
            <person name="Dreano S."/>
            <person name="Gloux S."/>
            <person name="Lelaure V."/>
            <person name="Mottier S."/>
            <person name="Galibert F."/>
            <person name="Aves S.J."/>
            <person name="Xiang Z."/>
            <person name="Hunt C."/>
            <person name="Moore K."/>
            <person name="Hurst S.M."/>
            <person name="Lucas M."/>
            <person name="Rochet M."/>
            <person name="Gaillardin C."/>
            <person name="Tallada V.A."/>
            <person name="Garzon A."/>
            <person name="Thode G."/>
            <person name="Daga R.R."/>
            <person name="Cruzado L."/>
            <person name="Jimenez J."/>
            <person name="Sanchez M."/>
            <person name="del Rey F."/>
            <person name="Benito J."/>
            <person name="Dominguez A."/>
            <person name="Revuelta J.L."/>
            <person name="Moreno S."/>
            <person name="Armstrong J."/>
            <person name="Forsburg S.L."/>
            <person name="Cerutti L."/>
            <person name="Lowe T."/>
            <person name="McCombie W.R."/>
            <person name="Paulsen I."/>
            <person name="Potashkin J."/>
            <person name="Shpakovski G.V."/>
            <person name="Ussery D."/>
            <person name="Barrell B.G."/>
            <person name="Nurse P."/>
        </authorList>
    </citation>
    <scope>NUCLEOTIDE SEQUENCE [LARGE SCALE GENOMIC DNA]</scope>
    <source>
        <strain>972 / ATCC 24843</strain>
    </source>
</reference>
<reference key="2">
    <citation type="journal article" date="2020" name="Elife">
        <title>Atg43 tethers isolation membranes to mitochondria to promote starvation-induced mitophagy in fission yeast.</title>
        <authorList>
            <person name="Fukuda T."/>
            <person name="Ebi Y."/>
            <person name="Saigusa T."/>
            <person name="Furukawa K."/>
            <person name="Yamashita S.I."/>
            <person name="Inoue K."/>
            <person name="Kobayashi D."/>
            <person name="Yoshida Y."/>
            <person name="Kanki T."/>
        </authorList>
    </citation>
    <scope>FUNCTION</scope>
    <scope>IDENTIFICATION IN THE MIM COMPLEX</scope>
    <scope>INTERACTION WITH MIM2 AND ATG43</scope>
    <scope>DISRUPTION PHENOTYPE</scope>
</reference>
<sequence>MEKNTVTVPKTLFSQVIHIFKYAAINLGLPFLNGVMLGFGEIFAHAFIHSLGWAPGHTRIYSIQRHQYIQA</sequence>
<comment type="function">
    <text evidence="1 3">Component of the mitochondrial outer import machinery (MIM) complex that mediates transport of proteins into mitochondrial compartments (PubMed:33138913). Promotes the insertion of tom70 into the outer mitochondrial membrane (PubMed:33138913). Promotes the insertion of atg43 into the outer mitochondrial membrane (PubMed:33138913). The MIM complex cooperates with the receptor tom70 in binding of precursor proteins and promotes their insertion and assembly into the outer membrane (By similarity). Involved in import of the subset of proteins with multiple alpha-helical transmembrane segments (By similarity). Required for the assembly of the TOM (translocase of outer membrane) receptor complex, which is responsible for the recognition and translocation of cytosolically synthesized mitochondrial preproteins (By similarity).</text>
</comment>
<comment type="subunit">
    <text evidence="3">Component of the mitochondrial outer import machinery (MIM) complex containing at least mim1 and mim2 (PubMed:33138913). Interacts with mim2 (PubMed:33138913). Interacts with mitophagy receptor atg43 (PubMed:33138913).</text>
</comment>
<comment type="subcellular location">
    <subcellularLocation>
        <location evidence="1">Mitochondrion outer membrane</location>
    </subcellularLocation>
</comment>
<comment type="disruption phenotype">
    <text evidence="3">Abnormal localization of atg43 to the outer mitochondrial membrane (PubMed:33138913). Severely decreases vegetative cell population growth (PubMed:33138913).</text>
</comment>
<comment type="similarity">
    <text evidence="5">Belongs to the MIM1 family.</text>
</comment>
<organism>
    <name type="scientific">Schizosaccharomyces pombe (strain 972 / ATCC 24843)</name>
    <name type="common">Fission yeast</name>
    <dbReference type="NCBI Taxonomy" id="284812"/>
    <lineage>
        <taxon>Eukaryota</taxon>
        <taxon>Fungi</taxon>
        <taxon>Dikarya</taxon>
        <taxon>Ascomycota</taxon>
        <taxon>Taphrinomycotina</taxon>
        <taxon>Schizosaccharomycetes</taxon>
        <taxon>Schizosaccharomycetales</taxon>
        <taxon>Schizosaccharomycetaceae</taxon>
        <taxon>Schizosaccharomyces</taxon>
    </lineage>
</organism>